<gene>
    <name type="primary">smim12</name>
    <name type="ORF">TGas122k06.1</name>
</gene>
<organism>
    <name type="scientific">Xenopus tropicalis</name>
    <name type="common">Western clawed frog</name>
    <name type="synonym">Silurana tropicalis</name>
    <dbReference type="NCBI Taxonomy" id="8364"/>
    <lineage>
        <taxon>Eukaryota</taxon>
        <taxon>Metazoa</taxon>
        <taxon>Chordata</taxon>
        <taxon>Craniata</taxon>
        <taxon>Vertebrata</taxon>
        <taxon>Euteleostomi</taxon>
        <taxon>Amphibia</taxon>
        <taxon>Batrachia</taxon>
        <taxon>Anura</taxon>
        <taxon>Pipoidea</taxon>
        <taxon>Pipidae</taxon>
        <taxon>Xenopodinae</taxon>
        <taxon>Xenopus</taxon>
        <taxon>Silurana</taxon>
    </lineage>
</organism>
<proteinExistence type="inferred from homology"/>
<name>SIM12_XENTR</name>
<protein>
    <recommendedName>
        <fullName>Small integral membrane protein 12</fullName>
    </recommendedName>
</protein>
<feature type="chain" id="PRO_0000414327" description="Small integral membrane protein 12">
    <location>
        <begin position="1"/>
        <end position="91"/>
    </location>
</feature>
<feature type="transmembrane region" description="Helical" evidence="1">
    <location>
        <begin position="12"/>
        <end position="34"/>
    </location>
</feature>
<comment type="subcellular location">
    <subcellularLocation>
        <location evidence="2">Membrane</location>
        <topology evidence="2">Single-pass membrane protein</topology>
    </subcellularLocation>
</comment>
<comment type="similarity">
    <text evidence="2">Belongs to the SMIM12 family.</text>
</comment>
<dbReference type="EMBL" id="CR848175">
    <property type="protein sequence ID" value="CAJ83448.1"/>
    <property type="molecule type" value="mRNA"/>
</dbReference>
<dbReference type="EMBL" id="AAMC01059955">
    <property type="status" value="NOT_ANNOTATED_CDS"/>
    <property type="molecule type" value="Genomic_DNA"/>
</dbReference>
<dbReference type="EMBL" id="BC161537">
    <property type="protein sequence ID" value="AAI61537.1"/>
    <property type="molecule type" value="mRNA"/>
</dbReference>
<dbReference type="RefSeq" id="NP_001016019.1">
    <property type="nucleotide sequence ID" value="NM_001016019.2"/>
</dbReference>
<dbReference type="RefSeq" id="XP_004911668.1">
    <property type="nucleotide sequence ID" value="XM_004911611.3"/>
</dbReference>
<dbReference type="RefSeq" id="XP_017947078.1">
    <property type="nucleotide sequence ID" value="XM_018091589.1"/>
</dbReference>
<dbReference type="RefSeq" id="XP_017949361.1">
    <property type="nucleotide sequence ID" value="XM_018093872.2"/>
</dbReference>
<dbReference type="SMR" id="Q28EM2"/>
<dbReference type="FunCoup" id="Q28EM2">
    <property type="interactions" value="533"/>
</dbReference>
<dbReference type="STRING" id="8364.ENSXETP00000007651"/>
<dbReference type="PaxDb" id="8364-ENSXETP00000035952"/>
<dbReference type="GeneID" id="548773"/>
<dbReference type="KEGG" id="xtr:548773"/>
<dbReference type="AGR" id="Xenbase:XB-GENE-5841153"/>
<dbReference type="CTD" id="113444"/>
<dbReference type="Xenbase" id="XB-GENE-5841153">
    <property type="gene designation" value="smim12"/>
</dbReference>
<dbReference type="eggNOG" id="ENOG502S2AD">
    <property type="taxonomic scope" value="Eukaryota"/>
</dbReference>
<dbReference type="HOGENOM" id="CLU_160787_0_0_1"/>
<dbReference type="InParanoid" id="Q28EM2"/>
<dbReference type="OMA" id="YHLEWFL"/>
<dbReference type="OrthoDB" id="10052506at2759"/>
<dbReference type="PhylomeDB" id="Q28EM2"/>
<dbReference type="TreeFam" id="TF328614"/>
<dbReference type="Proteomes" id="UP000008143">
    <property type="component" value="Chromosome 2"/>
</dbReference>
<dbReference type="Bgee" id="ENSXETG00000034553">
    <property type="expression patterns" value="Expressed in ovary and 12 other cell types or tissues"/>
</dbReference>
<dbReference type="GO" id="GO:0016020">
    <property type="term" value="C:membrane"/>
    <property type="evidence" value="ECO:0007669"/>
    <property type="project" value="UniProtKB-SubCell"/>
</dbReference>
<dbReference type="InterPro" id="IPR031933">
    <property type="entry name" value="UPF0767"/>
</dbReference>
<dbReference type="PANTHER" id="PTHR28599">
    <property type="entry name" value="SMALL INTEGRAL MEMBRANE PROTEIN 12"/>
    <property type="match status" value="1"/>
</dbReference>
<dbReference type="PANTHER" id="PTHR28599:SF1">
    <property type="entry name" value="SMALL INTEGRAL MEMBRANE PROTEIN 12"/>
    <property type="match status" value="1"/>
</dbReference>
<dbReference type="Pfam" id="PF15990">
    <property type="entry name" value="UPF0767"/>
    <property type="match status" value="1"/>
</dbReference>
<keyword id="KW-0472">Membrane</keyword>
<keyword id="KW-1185">Reference proteome</keyword>
<keyword id="KW-0812">Transmembrane</keyword>
<keyword id="KW-1133">Transmembrane helix</keyword>
<reference key="1">
    <citation type="submission" date="2006-10" db="EMBL/GenBank/DDBJ databases">
        <authorList>
            <consortium name="Sanger Xenopus tropicalis EST/cDNA project"/>
        </authorList>
    </citation>
    <scope>NUCLEOTIDE SEQUENCE [LARGE SCALE MRNA]</scope>
    <source>
        <tissue>Gastrula</tissue>
    </source>
</reference>
<reference key="2">
    <citation type="journal article" date="2010" name="Science">
        <title>The genome of the Western clawed frog Xenopus tropicalis.</title>
        <authorList>
            <person name="Hellsten U."/>
            <person name="Harland R.M."/>
            <person name="Gilchrist M.J."/>
            <person name="Hendrix D."/>
            <person name="Jurka J."/>
            <person name="Kapitonov V."/>
            <person name="Ovcharenko I."/>
            <person name="Putnam N.H."/>
            <person name="Shu S."/>
            <person name="Taher L."/>
            <person name="Blitz I.L."/>
            <person name="Blumberg B."/>
            <person name="Dichmann D.S."/>
            <person name="Dubchak I."/>
            <person name="Amaya E."/>
            <person name="Detter J.C."/>
            <person name="Fletcher R."/>
            <person name="Gerhard D.S."/>
            <person name="Goodstein D."/>
            <person name="Graves T."/>
            <person name="Grigoriev I.V."/>
            <person name="Grimwood J."/>
            <person name="Kawashima T."/>
            <person name="Lindquist E."/>
            <person name="Lucas S.M."/>
            <person name="Mead P.E."/>
            <person name="Mitros T."/>
            <person name="Ogino H."/>
            <person name="Ohta Y."/>
            <person name="Poliakov A.V."/>
            <person name="Pollet N."/>
            <person name="Robert J."/>
            <person name="Salamov A."/>
            <person name="Sater A.K."/>
            <person name="Schmutz J."/>
            <person name="Terry A."/>
            <person name="Vize P.D."/>
            <person name="Warren W.C."/>
            <person name="Wells D."/>
            <person name="Wills A."/>
            <person name="Wilson R.K."/>
            <person name="Zimmerman L.B."/>
            <person name="Zorn A.M."/>
            <person name="Grainger R."/>
            <person name="Grammer T."/>
            <person name="Khokha M.K."/>
            <person name="Richardson P.M."/>
            <person name="Rokhsar D.S."/>
        </authorList>
    </citation>
    <scope>NUCLEOTIDE SEQUENCE [LARGE SCALE GENOMIC DNA]</scope>
</reference>
<reference key="3">
    <citation type="submission" date="2008-04" db="EMBL/GenBank/DDBJ databases">
        <authorList>
            <consortium name="NIH - Xenopus Gene Collection (XGC) project"/>
        </authorList>
    </citation>
    <scope>NUCLEOTIDE SEQUENCE [LARGE SCALE MRNA]</scope>
    <source>
        <tissue>Embryo</tissue>
    </source>
</reference>
<accession>Q28EM2</accession>
<evidence type="ECO:0000255" key="1"/>
<evidence type="ECO:0000305" key="2"/>
<sequence length="91" mass="10555">MWPVLWAAARTYAPYITFPVAFVVGAVGYQLEWFIRGTPEQPVEELSILEKREERTLQETMGKDVTQVLSLKEKLEFTPKAVLNRNRQEKS</sequence>